<evidence type="ECO:0000250" key="1"/>
<evidence type="ECO:0000305" key="2"/>
<evidence type="ECO:0000305" key="3">
    <source>
    </source>
</evidence>
<dbReference type="EMBL" id="DQ138351">
    <property type="protein sequence ID" value="AAZ30429.1"/>
    <property type="molecule type" value="mRNA"/>
</dbReference>
<dbReference type="SMR" id="A4GDT3"/>
<dbReference type="Allergome" id="490">
    <property type="allergen name" value="Ole e 2"/>
</dbReference>
<dbReference type="GO" id="GO:0005938">
    <property type="term" value="C:cell cortex"/>
    <property type="evidence" value="ECO:0007669"/>
    <property type="project" value="TreeGrafter"/>
</dbReference>
<dbReference type="GO" id="GO:0005856">
    <property type="term" value="C:cytoskeleton"/>
    <property type="evidence" value="ECO:0007669"/>
    <property type="project" value="UniProtKB-SubCell"/>
</dbReference>
<dbReference type="GO" id="GO:0003785">
    <property type="term" value="F:actin monomer binding"/>
    <property type="evidence" value="ECO:0007669"/>
    <property type="project" value="TreeGrafter"/>
</dbReference>
<dbReference type="CDD" id="cd00148">
    <property type="entry name" value="PROF"/>
    <property type="match status" value="1"/>
</dbReference>
<dbReference type="FunFam" id="3.30.450.30:FF:000001">
    <property type="entry name" value="Profilin"/>
    <property type="match status" value="1"/>
</dbReference>
<dbReference type="Gene3D" id="3.30.450.30">
    <property type="entry name" value="Dynein light chain 2a, cytoplasmic"/>
    <property type="match status" value="1"/>
</dbReference>
<dbReference type="InterPro" id="IPR048278">
    <property type="entry name" value="PFN"/>
</dbReference>
<dbReference type="InterPro" id="IPR005455">
    <property type="entry name" value="PFN_euk"/>
</dbReference>
<dbReference type="InterPro" id="IPR036140">
    <property type="entry name" value="PFN_sf"/>
</dbReference>
<dbReference type="InterPro" id="IPR027310">
    <property type="entry name" value="Profilin_CS"/>
</dbReference>
<dbReference type="PANTHER" id="PTHR11604">
    <property type="entry name" value="PROFILIN"/>
    <property type="match status" value="1"/>
</dbReference>
<dbReference type="PANTHER" id="PTHR11604:SF25">
    <property type="entry name" value="PROFILIN-5"/>
    <property type="match status" value="1"/>
</dbReference>
<dbReference type="Pfam" id="PF00235">
    <property type="entry name" value="Profilin"/>
    <property type="match status" value="1"/>
</dbReference>
<dbReference type="PRINTS" id="PR00392">
    <property type="entry name" value="PROFILIN"/>
</dbReference>
<dbReference type="PRINTS" id="PR01640">
    <property type="entry name" value="PROFILINPLNT"/>
</dbReference>
<dbReference type="SMART" id="SM00392">
    <property type="entry name" value="PROF"/>
    <property type="match status" value="1"/>
</dbReference>
<dbReference type="SUPFAM" id="SSF55770">
    <property type="entry name" value="Profilin (actin-binding protein)"/>
    <property type="match status" value="1"/>
</dbReference>
<dbReference type="PROSITE" id="PS00414">
    <property type="entry name" value="PROFILIN"/>
    <property type="match status" value="1"/>
</dbReference>
<organism>
    <name type="scientific">Olea europaea</name>
    <name type="common">Common olive</name>
    <dbReference type="NCBI Taxonomy" id="4146"/>
    <lineage>
        <taxon>Eukaryota</taxon>
        <taxon>Viridiplantae</taxon>
        <taxon>Streptophyta</taxon>
        <taxon>Embryophyta</taxon>
        <taxon>Tracheophyta</taxon>
        <taxon>Spermatophyta</taxon>
        <taxon>Magnoliopsida</taxon>
        <taxon>eudicotyledons</taxon>
        <taxon>Gunneridae</taxon>
        <taxon>Pentapetalae</taxon>
        <taxon>asterids</taxon>
        <taxon>lamiids</taxon>
        <taxon>Lamiales</taxon>
        <taxon>Oleaceae</taxon>
        <taxon>Oleeae</taxon>
        <taxon>Olea</taxon>
    </lineage>
</organism>
<name>PROBF_OLEEU</name>
<proteinExistence type="evidence at protein level"/>
<reference key="1">
    <citation type="journal article" date="2012" name="PLoS ONE">
        <title>Characterization of profilin polymorphism in pollen with a focus on multifunctionality.</title>
        <authorList>
            <person name="Jimenez-Lopez J.C."/>
            <person name="Morales S."/>
            <person name="Castro A.J."/>
            <person name="Volkmann D."/>
            <person name="Rodriguez-Garcia M.I."/>
            <person name="Alche Jde D."/>
        </authorList>
    </citation>
    <scope>NUCLEOTIDE SEQUENCE [MRNA]</scope>
    <scope>POLYMORPHISM</scope>
    <source>
        <strain>cv. Villalonga</strain>
    </source>
</reference>
<reference key="2">
    <citation type="journal article" date="2013" name="PLoS ONE">
        <title>Analysis of the effects of polymorphism on pollen profilin structural functionality and the generation of conformational, T- and B-cell epitopes.</title>
        <authorList>
            <person name="Jimenez-Lopez J.C."/>
            <person name="Rodriguez-Garcia M.I."/>
            <person name="Alche J.D."/>
        </authorList>
    </citation>
    <scope>3D-STRUCTURE MODELING</scope>
    <scope>DISULFIDE BOND</scope>
</reference>
<comment type="function">
    <text evidence="1">Binds to actin and affects the structure of the cytoskeleton. At high concentrations, profilin prevents the polymerization of actin, whereas it enhances it at low concentrations (By similarity).</text>
</comment>
<comment type="subunit">
    <text evidence="1">Occurs in many kinds of cells as a complex with monomeric actin in a 1:1 ratio.</text>
</comment>
<comment type="subcellular location">
    <subcellularLocation>
        <location evidence="1">Cytoplasm</location>
        <location evidence="1">Cytoskeleton</location>
    </subcellularLocation>
</comment>
<comment type="PTM">
    <text evidence="1">Phosphorylated by MAP kinases.</text>
</comment>
<comment type="polymorphism">
    <text>Several isoforms of the allergen exist due to polymorphism.</text>
</comment>
<comment type="allergen">
    <text>Causes an allergic reaction in human.</text>
</comment>
<comment type="miscellaneous">
    <text evidence="3">The variability of the residues taking part of IgE-binding epitopes might be responsible of the difference in cross-reactivity among olive pollen cultivars, and between distantly related pollen species, leading to a variable range of allergy reactions among atopic patients.</text>
</comment>
<comment type="similarity">
    <text evidence="2">Belongs to the profilin family.</text>
</comment>
<keyword id="KW-0009">Actin-binding</keyword>
<keyword id="KW-0020">Allergen</keyword>
<keyword id="KW-0963">Cytoplasm</keyword>
<keyword id="KW-0206">Cytoskeleton</keyword>
<keyword id="KW-1015">Disulfide bond</keyword>
<keyword id="KW-0597">Phosphoprotein</keyword>
<sequence>MSWQAYVDDHLMCDIEGHEGHRLTAAAIVGHDGSVWAQSATFPQFKPEEMNGIMTDFNEPGHLAPTGLHLGGTKYMVIQGEAGAVIRGKKGSGGITIKKTGQALVFGIYEESVTPGQCNMVVERLGDYLLEQGL</sequence>
<feature type="initiator methionine" description="Removed" evidence="1">
    <location>
        <position position="1"/>
    </location>
</feature>
<feature type="chain" id="PRO_0000425023" description="Profilin-1">
    <location>
        <begin position="2"/>
        <end position="134"/>
    </location>
</feature>
<feature type="short sequence motif" description="Involved in PIP2 interaction">
    <location>
        <begin position="84"/>
        <end position="100"/>
    </location>
</feature>
<feature type="modified residue" description="Phosphothreonine" evidence="1">
    <location>
        <position position="114"/>
    </location>
</feature>
<feature type="disulfide bond" evidence="3">
    <location>
        <begin position="13"/>
        <end position="118"/>
    </location>
</feature>
<accession>A4GDT3</accession>
<protein>
    <recommendedName>
        <fullName>Profilin-1</fullName>
    </recommendedName>
    <alternativeName>
        <fullName>Pollen allergen Ole e 2</fullName>
    </alternativeName>
    <allergenName>Ole e 2</allergenName>
</protein>